<name>RPOB_STRPB</name>
<organism>
    <name type="scientific">Streptococcus pyogenes serotype M12 (strain MGAS2096)</name>
    <dbReference type="NCBI Taxonomy" id="370553"/>
    <lineage>
        <taxon>Bacteria</taxon>
        <taxon>Bacillati</taxon>
        <taxon>Bacillota</taxon>
        <taxon>Bacilli</taxon>
        <taxon>Lactobacillales</taxon>
        <taxon>Streptococcaceae</taxon>
        <taxon>Streptococcus</taxon>
    </lineage>
</organism>
<dbReference type="EC" id="2.7.7.6" evidence="1"/>
<dbReference type="EMBL" id="CP000261">
    <property type="protein sequence ID" value="ABF35138.1"/>
    <property type="molecule type" value="Genomic_DNA"/>
</dbReference>
<dbReference type="SMR" id="Q1JE20"/>
<dbReference type="KEGG" id="spj:MGAS2096_Spy0086"/>
<dbReference type="HOGENOM" id="CLU_000524_4_1_9"/>
<dbReference type="GO" id="GO:0000428">
    <property type="term" value="C:DNA-directed RNA polymerase complex"/>
    <property type="evidence" value="ECO:0007669"/>
    <property type="project" value="UniProtKB-KW"/>
</dbReference>
<dbReference type="GO" id="GO:0003677">
    <property type="term" value="F:DNA binding"/>
    <property type="evidence" value="ECO:0007669"/>
    <property type="project" value="UniProtKB-UniRule"/>
</dbReference>
<dbReference type="GO" id="GO:0003899">
    <property type="term" value="F:DNA-directed RNA polymerase activity"/>
    <property type="evidence" value="ECO:0007669"/>
    <property type="project" value="UniProtKB-UniRule"/>
</dbReference>
<dbReference type="GO" id="GO:0032549">
    <property type="term" value="F:ribonucleoside binding"/>
    <property type="evidence" value="ECO:0007669"/>
    <property type="project" value="InterPro"/>
</dbReference>
<dbReference type="GO" id="GO:0006351">
    <property type="term" value="P:DNA-templated transcription"/>
    <property type="evidence" value="ECO:0007669"/>
    <property type="project" value="UniProtKB-UniRule"/>
</dbReference>
<dbReference type="CDD" id="cd00653">
    <property type="entry name" value="RNA_pol_B_RPB2"/>
    <property type="match status" value="1"/>
</dbReference>
<dbReference type="Gene3D" id="2.40.50.100">
    <property type="match status" value="1"/>
</dbReference>
<dbReference type="Gene3D" id="2.40.50.150">
    <property type="match status" value="1"/>
</dbReference>
<dbReference type="Gene3D" id="3.90.1100.10">
    <property type="match status" value="2"/>
</dbReference>
<dbReference type="Gene3D" id="2.30.150.10">
    <property type="entry name" value="DNA-directed RNA polymerase, beta subunit, external 1 domain"/>
    <property type="match status" value="1"/>
</dbReference>
<dbReference type="Gene3D" id="2.40.270.10">
    <property type="entry name" value="DNA-directed RNA polymerase, subunit 2, domain 6"/>
    <property type="match status" value="1"/>
</dbReference>
<dbReference type="Gene3D" id="3.90.1800.10">
    <property type="entry name" value="RNA polymerase alpha subunit dimerisation domain"/>
    <property type="match status" value="1"/>
</dbReference>
<dbReference type="Gene3D" id="3.90.1110.10">
    <property type="entry name" value="RNA polymerase Rpb2, domain 2"/>
    <property type="match status" value="1"/>
</dbReference>
<dbReference type="HAMAP" id="MF_01321">
    <property type="entry name" value="RNApol_bact_RpoB"/>
    <property type="match status" value="1"/>
</dbReference>
<dbReference type="InterPro" id="IPR042107">
    <property type="entry name" value="DNA-dir_RNA_pol_bsu_ext_1_sf"/>
</dbReference>
<dbReference type="InterPro" id="IPR019462">
    <property type="entry name" value="DNA-dir_RNA_pol_bsu_external_1"/>
</dbReference>
<dbReference type="InterPro" id="IPR015712">
    <property type="entry name" value="DNA-dir_RNA_pol_su2"/>
</dbReference>
<dbReference type="InterPro" id="IPR007120">
    <property type="entry name" value="DNA-dir_RNAP_su2_dom"/>
</dbReference>
<dbReference type="InterPro" id="IPR037033">
    <property type="entry name" value="DNA-dir_RNAP_su2_hyb_sf"/>
</dbReference>
<dbReference type="InterPro" id="IPR010243">
    <property type="entry name" value="RNA_pol_bsu_bac"/>
</dbReference>
<dbReference type="InterPro" id="IPR007121">
    <property type="entry name" value="RNA_pol_bsu_CS"/>
</dbReference>
<dbReference type="InterPro" id="IPR007644">
    <property type="entry name" value="RNA_pol_bsu_protrusion"/>
</dbReference>
<dbReference type="InterPro" id="IPR007642">
    <property type="entry name" value="RNA_pol_Rpb2_2"/>
</dbReference>
<dbReference type="InterPro" id="IPR037034">
    <property type="entry name" value="RNA_pol_Rpb2_2_sf"/>
</dbReference>
<dbReference type="InterPro" id="IPR007645">
    <property type="entry name" value="RNA_pol_Rpb2_3"/>
</dbReference>
<dbReference type="InterPro" id="IPR007641">
    <property type="entry name" value="RNA_pol_Rpb2_7"/>
</dbReference>
<dbReference type="InterPro" id="IPR014724">
    <property type="entry name" value="RNA_pol_RPB2_OB-fold"/>
</dbReference>
<dbReference type="NCBIfam" id="NF001616">
    <property type="entry name" value="PRK00405.1"/>
    <property type="match status" value="1"/>
</dbReference>
<dbReference type="NCBIfam" id="TIGR02013">
    <property type="entry name" value="rpoB"/>
    <property type="match status" value="1"/>
</dbReference>
<dbReference type="PANTHER" id="PTHR20856">
    <property type="entry name" value="DNA-DIRECTED RNA POLYMERASE I SUBUNIT 2"/>
    <property type="match status" value="1"/>
</dbReference>
<dbReference type="Pfam" id="PF04563">
    <property type="entry name" value="RNA_pol_Rpb2_1"/>
    <property type="match status" value="1"/>
</dbReference>
<dbReference type="Pfam" id="PF04561">
    <property type="entry name" value="RNA_pol_Rpb2_2"/>
    <property type="match status" value="2"/>
</dbReference>
<dbReference type="Pfam" id="PF04565">
    <property type="entry name" value="RNA_pol_Rpb2_3"/>
    <property type="match status" value="1"/>
</dbReference>
<dbReference type="Pfam" id="PF10385">
    <property type="entry name" value="RNA_pol_Rpb2_45"/>
    <property type="match status" value="1"/>
</dbReference>
<dbReference type="Pfam" id="PF00562">
    <property type="entry name" value="RNA_pol_Rpb2_6"/>
    <property type="match status" value="1"/>
</dbReference>
<dbReference type="Pfam" id="PF04560">
    <property type="entry name" value="RNA_pol_Rpb2_7"/>
    <property type="match status" value="1"/>
</dbReference>
<dbReference type="SUPFAM" id="SSF64484">
    <property type="entry name" value="beta and beta-prime subunits of DNA dependent RNA-polymerase"/>
    <property type="match status" value="1"/>
</dbReference>
<dbReference type="PROSITE" id="PS01166">
    <property type="entry name" value="RNA_POL_BETA"/>
    <property type="match status" value="1"/>
</dbReference>
<sequence length="1188" mass="132855">MAGHEVRYGKHRTRRSFSRIKEVLDLPNLIEIQTDSFQDFLDSGLKEVFEDVLPISNFTDTMELEFVGYEFKEPKYTLEEARIHDASYSAPIFVTFRLVNKETGEIKTQEVFFGDFPIMTEMGTFIINGGERIIVSQLVRSPGVYFNDKVDKNGKVGYGSTVIPNRGAWLELETDSKDIAYTRIDRTRKIPFTTLVRALGFSGDDEIVDIFGESDLVRNTIEKDIHKNPSDSRTDEALKEIYERLRPGEPKTADSSRSLLIARFFDARRYDLAAVGRYKVNKKLNIKTRLLNQIIAENLVDAETGEILVEAGTEMTRSVIESIEEHLDGDLNKFVYTPNDYAVVTEPVVLQKFKVVSPIDPDRVVTIVGNANPDDKVRALTPADILAEMSYFLNLAEGLGKVDDIDHLGNRRIRAVGELLANQFRIGLARMERNVRERMSVQDNDVLTPQQIINIRPVTAAVKEFFGSSQLSQFMDQHNPLSELSHKRRLSALGPGGLTRDRAGYEVRDVHYTHYGRMCPIETPEGPNIGLINNLSSFGHLNKYGFIQTPYRKVDRATGRVTNEIVWLTADEEDEYTVAQANSKLNEDGTFAEEIVMGRHQGNNQEFSASVVDFVDVSPKQVVAVATACIPFLENDDSNRALMGANMQRQAVPLIDPKAPYVGTGMEYQAAHDSGAAVIAQHNGKVVFSDAEKVEIRRQDGSLDVYHITKFRRSNSGTAYNQRTLVKVGDIVEKGDFIADGPSMENGEMALGQNPVVAYMTWEGYNFEDAVIMSERLVKEDVYTSVHLEEFESETRDTKLGPEEITREIPNVGEEALKDLDEMGIIRIGAEVKEGDILVGKVTPKGEKDLSAEERLLHAIFGDKSREVRDTSLRVPHGGDGIVRDVKIFTRANGDELQSGVNMLVRVYIAQKRKIKVGDKMAGRHGNKGVVSRIVPVEDMPYLPDGTPVDIMLNPLGVPSRMNIGQVMELHLGMAARNLGIHIATPVFDGASSEDLWDTVREAGMDSDAKTVLYDGRTGEPFDNRVSVGVMYMIKLHHMVDDKLHARSVGPYSLVTQQPLGGKAQFGGQRFGEMEVWALEAYGASNVLQEILTYKSDDVTGRLKAYEAITKGKPIPKPGVPESFRVLVKELQSLGLDMRVLDEDDNEVELRDLDEGEDDDIMHVDDLEKAREKQAQETQEVSETTDEK</sequence>
<proteinExistence type="inferred from homology"/>
<protein>
    <recommendedName>
        <fullName evidence="1">DNA-directed RNA polymerase subunit beta</fullName>
        <shortName evidence="1">RNAP subunit beta</shortName>
        <ecNumber evidence="1">2.7.7.6</ecNumber>
    </recommendedName>
    <alternativeName>
        <fullName evidence="1">RNA polymerase subunit beta</fullName>
    </alternativeName>
    <alternativeName>
        <fullName evidence="1">Transcriptase subunit beta</fullName>
    </alternativeName>
</protein>
<reference key="1">
    <citation type="journal article" date="2006" name="Proc. Natl. Acad. Sci. U.S.A.">
        <title>Molecular genetic anatomy of inter- and intraserotype variation in the human bacterial pathogen group A Streptococcus.</title>
        <authorList>
            <person name="Beres S.B."/>
            <person name="Richter E.W."/>
            <person name="Nagiec M.J."/>
            <person name="Sumby P."/>
            <person name="Porcella S.F."/>
            <person name="DeLeo F.R."/>
            <person name="Musser J.M."/>
        </authorList>
    </citation>
    <scope>NUCLEOTIDE SEQUENCE [LARGE SCALE GENOMIC DNA]</scope>
    <source>
        <strain>MGAS2096</strain>
    </source>
</reference>
<feature type="chain" id="PRO_0000300409" description="DNA-directed RNA polymerase subunit beta">
    <location>
        <begin position="1"/>
        <end position="1188"/>
    </location>
</feature>
<evidence type="ECO:0000255" key="1">
    <source>
        <dbReference type="HAMAP-Rule" id="MF_01321"/>
    </source>
</evidence>
<keyword id="KW-0240">DNA-directed RNA polymerase</keyword>
<keyword id="KW-0548">Nucleotidyltransferase</keyword>
<keyword id="KW-0804">Transcription</keyword>
<keyword id="KW-0808">Transferase</keyword>
<gene>
    <name evidence="1" type="primary">rpoB</name>
    <name type="ordered locus">MGAS2096_Spy0086</name>
</gene>
<comment type="function">
    <text evidence="1">DNA-dependent RNA polymerase catalyzes the transcription of DNA into RNA using the four ribonucleoside triphosphates as substrates.</text>
</comment>
<comment type="catalytic activity">
    <reaction evidence="1">
        <text>RNA(n) + a ribonucleoside 5'-triphosphate = RNA(n+1) + diphosphate</text>
        <dbReference type="Rhea" id="RHEA:21248"/>
        <dbReference type="Rhea" id="RHEA-COMP:14527"/>
        <dbReference type="Rhea" id="RHEA-COMP:17342"/>
        <dbReference type="ChEBI" id="CHEBI:33019"/>
        <dbReference type="ChEBI" id="CHEBI:61557"/>
        <dbReference type="ChEBI" id="CHEBI:140395"/>
        <dbReference type="EC" id="2.7.7.6"/>
    </reaction>
</comment>
<comment type="subunit">
    <text evidence="1">The RNAP catalytic core consists of 2 alpha, 1 beta, 1 beta' and 1 omega subunit. When a sigma factor is associated with the core the holoenzyme is formed, which can initiate transcription.</text>
</comment>
<comment type="similarity">
    <text evidence="1">Belongs to the RNA polymerase beta chain family.</text>
</comment>
<accession>Q1JE20</accession>